<feature type="chain" id="PRO_1000191260" description="Probable septum site-determining protein MinC">
    <location>
        <begin position="1"/>
        <end position="242"/>
    </location>
</feature>
<gene>
    <name evidence="1" type="primary">minC</name>
    <name type="ordered locus">Tgr7_1936</name>
</gene>
<accession>B8GT02</accession>
<evidence type="ECO:0000255" key="1">
    <source>
        <dbReference type="HAMAP-Rule" id="MF_00267"/>
    </source>
</evidence>
<name>MINC_THISH</name>
<protein>
    <recommendedName>
        <fullName evidence="1">Probable septum site-determining protein MinC</fullName>
    </recommendedName>
</protein>
<organism>
    <name type="scientific">Thioalkalivibrio sulfidiphilus (strain HL-EbGR7)</name>
    <dbReference type="NCBI Taxonomy" id="396588"/>
    <lineage>
        <taxon>Bacteria</taxon>
        <taxon>Pseudomonadati</taxon>
        <taxon>Pseudomonadota</taxon>
        <taxon>Gammaproteobacteria</taxon>
        <taxon>Chromatiales</taxon>
        <taxon>Ectothiorhodospiraceae</taxon>
        <taxon>Thioalkalivibrio</taxon>
    </lineage>
</organism>
<reference key="1">
    <citation type="journal article" date="2011" name="Stand. Genomic Sci.">
        <title>Complete genome sequence of 'Thioalkalivibrio sulfidophilus' HL-EbGr7.</title>
        <authorList>
            <person name="Muyzer G."/>
            <person name="Sorokin D.Y."/>
            <person name="Mavromatis K."/>
            <person name="Lapidus A."/>
            <person name="Clum A."/>
            <person name="Ivanova N."/>
            <person name="Pati A."/>
            <person name="d'Haeseleer P."/>
            <person name="Woyke T."/>
            <person name="Kyrpides N.C."/>
        </authorList>
    </citation>
    <scope>NUCLEOTIDE SEQUENCE [LARGE SCALE GENOMIC DNA]</scope>
    <source>
        <strain>HL-EbGR7</strain>
    </source>
</reference>
<sequence>MSAQAAAATAAALQFKGRMITVTLLRLLSPSLEAVGRELDARLADGSGLLAGLPTVLDLEALGESAAGLELAALAATLRAHGVSLIGLRELPGEAGEALRTRAEAAGLAVLNVDGSRAAPRREVEVSPRPAAEPVRSLLVTQPVRSGQQVYARGGDLILTAPVSAGAEVMADGNIHVYAPLRGRAMAGVLGDSGARIFCQRLDCELVAVAGHYRLSEQISDAERAGPVQVRLEGESLVIEAL</sequence>
<keyword id="KW-0131">Cell cycle</keyword>
<keyword id="KW-0132">Cell division</keyword>
<keyword id="KW-1185">Reference proteome</keyword>
<keyword id="KW-0717">Septation</keyword>
<dbReference type="EMBL" id="CP001339">
    <property type="protein sequence ID" value="ACL73017.1"/>
    <property type="molecule type" value="Genomic_DNA"/>
</dbReference>
<dbReference type="RefSeq" id="WP_012638496.1">
    <property type="nucleotide sequence ID" value="NC_011901.1"/>
</dbReference>
<dbReference type="SMR" id="B8GT02"/>
<dbReference type="STRING" id="396588.Tgr7_1936"/>
<dbReference type="KEGG" id="tgr:Tgr7_1936"/>
<dbReference type="eggNOG" id="COG0850">
    <property type="taxonomic scope" value="Bacteria"/>
</dbReference>
<dbReference type="HOGENOM" id="CLU_067812_0_1_6"/>
<dbReference type="OrthoDB" id="9794530at2"/>
<dbReference type="Proteomes" id="UP000002383">
    <property type="component" value="Chromosome"/>
</dbReference>
<dbReference type="GO" id="GO:0000902">
    <property type="term" value="P:cell morphogenesis"/>
    <property type="evidence" value="ECO:0007669"/>
    <property type="project" value="InterPro"/>
</dbReference>
<dbReference type="GO" id="GO:0000917">
    <property type="term" value="P:division septum assembly"/>
    <property type="evidence" value="ECO:0007669"/>
    <property type="project" value="UniProtKB-KW"/>
</dbReference>
<dbReference type="GO" id="GO:0051302">
    <property type="term" value="P:regulation of cell division"/>
    <property type="evidence" value="ECO:0007669"/>
    <property type="project" value="InterPro"/>
</dbReference>
<dbReference type="GO" id="GO:1901891">
    <property type="term" value="P:regulation of cell septum assembly"/>
    <property type="evidence" value="ECO:0007669"/>
    <property type="project" value="InterPro"/>
</dbReference>
<dbReference type="Gene3D" id="2.160.20.70">
    <property type="match status" value="1"/>
</dbReference>
<dbReference type="Gene3D" id="3.30.70.260">
    <property type="match status" value="1"/>
</dbReference>
<dbReference type="HAMAP" id="MF_00267">
    <property type="entry name" value="MinC"/>
    <property type="match status" value="1"/>
</dbReference>
<dbReference type="InterPro" id="IPR016098">
    <property type="entry name" value="CAP/MinC_C"/>
</dbReference>
<dbReference type="InterPro" id="IPR013033">
    <property type="entry name" value="MinC"/>
</dbReference>
<dbReference type="InterPro" id="IPR036145">
    <property type="entry name" value="MinC_C_sf"/>
</dbReference>
<dbReference type="InterPro" id="IPR007874">
    <property type="entry name" value="MinC_N"/>
</dbReference>
<dbReference type="InterPro" id="IPR005526">
    <property type="entry name" value="Septum_form_inhib_MinC_C"/>
</dbReference>
<dbReference type="NCBIfam" id="TIGR01222">
    <property type="entry name" value="minC"/>
    <property type="match status" value="1"/>
</dbReference>
<dbReference type="PANTHER" id="PTHR34108">
    <property type="entry name" value="SEPTUM SITE-DETERMINING PROTEIN MINC"/>
    <property type="match status" value="1"/>
</dbReference>
<dbReference type="PANTHER" id="PTHR34108:SF1">
    <property type="entry name" value="SEPTUM SITE-DETERMINING PROTEIN MINC"/>
    <property type="match status" value="1"/>
</dbReference>
<dbReference type="Pfam" id="PF03775">
    <property type="entry name" value="MinC_C"/>
    <property type="match status" value="1"/>
</dbReference>
<dbReference type="Pfam" id="PF05209">
    <property type="entry name" value="MinC_N"/>
    <property type="match status" value="1"/>
</dbReference>
<dbReference type="SUPFAM" id="SSF63848">
    <property type="entry name" value="Cell-division inhibitor MinC, C-terminal domain"/>
    <property type="match status" value="1"/>
</dbReference>
<comment type="function">
    <text evidence="1">Cell division inhibitor that blocks the formation of polar Z ring septums. Rapidly oscillates between the poles of the cell to destabilize FtsZ filaments that have formed before they mature into polar Z rings. Prevents FtsZ polymerization.</text>
</comment>
<comment type="subunit">
    <text evidence="1">Interacts with MinD and FtsZ.</text>
</comment>
<comment type="similarity">
    <text evidence="1">Belongs to the MinC family.</text>
</comment>
<proteinExistence type="inferred from homology"/>